<reference key="1">
    <citation type="journal article" date="2001" name="Nature">
        <title>Complete genome sequence of a multiple drug resistant Salmonella enterica serovar Typhi CT18.</title>
        <authorList>
            <person name="Parkhill J."/>
            <person name="Dougan G."/>
            <person name="James K.D."/>
            <person name="Thomson N.R."/>
            <person name="Pickard D."/>
            <person name="Wain J."/>
            <person name="Churcher C.M."/>
            <person name="Mungall K.L."/>
            <person name="Bentley S.D."/>
            <person name="Holden M.T.G."/>
            <person name="Sebaihia M."/>
            <person name="Baker S."/>
            <person name="Basham D."/>
            <person name="Brooks K."/>
            <person name="Chillingworth T."/>
            <person name="Connerton P."/>
            <person name="Cronin A."/>
            <person name="Davis P."/>
            <person name="Davies R.M."/>
            <person name="Dowd L."/>
            <person name="White N."/>
            <person name="Farrar J."/>
            <person name="Feltwell T."/>
            <person name="Hamlin N."/>
            <person name="Haque A."/>
            <person name="Hien T.T."/>
            <person name="Holroyd S."/>
            <person name="Jagels K."/>
            <person name="Krogh A."/>
            <person name="Larsen T.S."/>
            <person name="Leather S."/>
            <person name="Moule S."/>
            <person name="O'Gaora P."/>
            <person name="Parry C."/>
            <person name="Quail M.A."/>
            <person name="Rutherford K.M."/>
            <person name="Simmonds M."/>
            <person name="Skelton J."/>
            <person name="Stevens K."/>
            <person name="Whitehead S."/>
            <person name="Barrell B.G."/>
        </authorList>
    </citation>
    <scope>NUCLEOTIDE SEQUENCE [LARGE SCALE GENOMIC DNA]</scope>
    <source>
        <strain>CT18</strain>
    </source>
</reference>
<reference key="2">
    <citation type="journal article" date="2003" name="J. Bacteriol.">
        <title>Comparative genomics of Salmonella enterica serovar Typhi strains Ty2 and CT18.</title>
        <authorList>
            <person name="Deng W."/>
            <person name="Liou S.-R."/>
            <person name="Plunkett G. III"/>
            <person name="Mayhew G.F."/>
            <person name="Rose D.J."/>
            <person name="Burland V."/>
            <person name="Kodoyianni V."/>
            <person name="Schwartz D.C."/>
            <person name="Blattner F.R."/>
        </authorList>
    </citation>
    <scope>NUCLEOTIDE SEQUENCE [LARGE SCALE GENOMIC DNA]</scope>
    <source>
        <strain>ATCC 700931 / Ty2</strain>
    </source>
</reference>
<dbReference type="EC" id="5.2.1.8"/>
<dbReference type="EMBL" id="AL513382">
    <property type="protein sequence ID" value="CAD09407.1"/>
    <property type="molecule type" value="Genomic_DNA"/>
</dbReference>
<dbReference type="EMBL" id="AE014613">
    <property type="protein sequence ID" value="AAO70912.1"/>
    <property type="molecule type" value="Genomic_DNA"/>
</dbReference>
<dbReference type="RefSeq" id="NP_457838.1">
    <property type="nucleotide sequence ID" value="NC_003198.1"/>
</dbReference>
<dbReference type="RefSeq" id="WP_001096806.1">
    <property type="nucleotide sequence ID" value="NZ_WSUR01000032.1"/>
</dbReference>
<dbReference type="SMR" id="P0A266"/>
<dbReference type="STRING" id="220341.gene:17587502"/>
<dbReference type="KEGG" id="stt:t3388"/>
<dbReference type="KEGG" id="sty:STY3647"/>
<dbReference type="PATRIC" id="fig|220341.7.peg.3716"/>
<dbReference type="eggNOG" id="COG0760">
    <property type="taxonomic scope" value="Bacteria"/>
</dbReference>
<dbReference type="HOGENOM" id="CLU_090028_6_1_6"/>
<dbReference type="OMA" id="GPVRTQF"/>
<dbReference type="OrthoDB" id="9812372at2"/>
<dbReference type="Proteomes" id="UP000000541">
    <property type="component" value="Chromosome"/>
</dbReference>
<dbReference type="Proteomes" id="UP000002670">
    <property type="component" value="Chromosome"/>
</dbReference>
<dbReference type="GO" id="GO:0005737">
    <property type="term" value="C:cytoplasm"/>
    <property type="evidence" value="ECO:0007669"/>
    <property type="project" value="UniProtKB-SubCell"/>
</dbReference>
<dbReference type="GO" id="GO:0003755">
    <property type="term" value="F:peptidyl-prolyl cis-trans isomerase activity"/>
    <property type="evidence" value="ECO:0007669"/>
    <property type="project" value="UniProtKB-KW"/>
</dbReference>
<dbReference type="FunFam" id="3.10.50.40:FF:000003">
    <property type="entry name" value="Peptidylprolyl isomerase"/>
    <property type="match status" value="1"/>
</dbReference>
<dbReference type="Gene3D" id="3.10.50.40">
    <property type="match status" value="1"/>
</dbReference>
<dbReference type="InterPro" id="IPR046357">
    <property type="entry name" value="PPIase_dom_sf"/>
</dbReference>
<dbReference type="InterPro" id="IPR000297">
    <property type="entry name" value="PPIase_PpiC"/>
</dbReference>
<dbReference type="InterPro" id="IPR023058">
    <property type="entry name" value="PPIase_PpiC_CS"/>
</dbReference>
<dbReference type="InterPro" id="IPR052204">
    <property type="entry name" value="PpiC/parvulin_rotamase"/>
</dbReference>
<dbReference type="NCBIfam" id="NF011969">
    <property type="entry name" value="PRK15441.1"/>
    <property type="match status" value="1"/>
</dbReference>
<dbReference type="PANTHER" id="PTHR43629">
    <property type="entry name" value="PEPTIDYL-PROLYL CIS-TRANS ISOMERASE"/>
    <property type="match status" value="1"/>
</dbReference>
<dbReference type="PANTHER" id="PTHR43629:SF3">
    <property type="entry name" value="PEPTIDYL-PROLYL CIS-TRANS ISOMERASE C"/>
    <property type="match status" value="1"/>
</dbReference>
<dbReference type="Pfam" id="PF13616">
    <property type="entry name" value="Rotamase_3"/>
    <property type="match status" value="1"/>
</dbReference>
<dbReference type="SUPFAM" id="SSF54534">
    <property type="entry name" value="FKBP-like"/>
    <property type="match status" value="1"/>
</dbReference>
<dbReference type="PROSITE" id="PS01096">
    <property type="entry name" value="PPIC_PPIASE_1"/>
    <property type="match status" value="1"/>
</dbReference>
<dbReference type="PROSITE" id="PS50198">
    <property type="entry name" value="PPIC_PPIASE_2"/>
    <property type="match status" value="1"/>
</dbReference>
<sequence>MAKMAAALHILVKEEKLALDLLEQIKNGGDFEKLAKKHSICPSGKKGGHLGEFRQGQMVPAFDKVVFSCPVLEPTGPLHTQFGYHIIKVLYRK</sequence>
<keyword id="KW-0963">Cytoplasm</keyword>
<keyword id="KW-0413">Isomerase</keyword>
<keyword id="KW-0697">Rotamase</keyword>
<protein>
    <recommendedName>
        <fullName>Peptidyl-prolyl cis-trans isomerase C</fullName>
        <shortName>PPIase C</shortName>
        <ecNumber>5.2.1.8</ecNumber>
    </recommendedName>
    <alternativeName>
        <fullName>Parvulin</fullName>
    </alternativeName>
    <alternativeName>
        <fullName>Rotamase C</fullName>
    </alternativeName>
</protein>
<feature type="initiator methionine" description="Removed" evidence="1">
    <location>
        <position position="1"/>
    </location>
</feature>
<feature type="chain" id="PRO_0000193418" description="Peptidyl-prolyl cis-trans isomerase C">
    <location>
        <begin position="2"/>
        <end position="93"/>
    </location>
</feature>
<feature type="domain" description="PpiC" evidence="2">
    <location>
        <begin position="2"/>
        <end position="91"/>
    </location>
</feature>
<name>PPIC_SALTI</name>
<gene>
    <name type="primary">ppiC</name>
    <name type="ordered locus">STY3647</name>
    <name type="ordered locus">t3388</name>
</gene>
<organism>
    <name type="scientific">Salmonella typhi</name>
    <dbReference type="NCBI Taxonomy" id="90370"/>
    <lineage>
        <taxon>Bacteria</taxon>
        <taxon>Pseudomonadati</taxon>
        <taxon>Pseudomonadota</taxon>
        <taxon>Gammaproteobacteria</taxon>
        <taxon>Enterobacterales</taxon>
        <taxon>Enterobacteriaceae</taxon>
        <taxon>Salmonella</taxon>
    </lineage>
</organism>
<evidence type="ECO:0000250" key="1"/>
<evidence type="ECO:0000255" key="2">
    <source>
        <dbReference type="PROSITE-ProRule" id="PRU00278"/>
    </source>
</evidence>
<evidence type="ECO:0000305" key="3"/>
<accession>P0A266</accession>
<accession>Q9L6S3</accession>
<comment type="function">
    <text evidence="1">PPIases accelerate the folding of proteins. It prefers amino acid residues with hydrophobic side chains like leucine and phenylalanine in the P1 position of the peptides substrates (By similarity).</text>
</comment>
<comment type="catalytic activity">
    <reaction>
        <text>[protein]-peptidylproline (omega=180) = [protein]-peptidylproline (omega=0)</text>
        <dbReference type="Rhea" id="RHEA:16237"/>
        <dbReference type="Rhea" id="RHEA-COMP:10747"/>
        <dbReference type="Rhea" id="RHEA-COMP:10748"/>
        <dbReference type="ChEBI" id="CHEBI:83833"/>
        <dbReference type="ChEBI" id="CHEBI:83834"/>
        <dbReference type="EC" id="5.2.1.8"/>
    </reaction>
</comment>
<comment type="subcellular location">
    <subcellularLocation>
        <location evidence="1">Cytoplasm</location>
    </subcellularLocation>
</comment>
<comment type="similarity">
    <text evidence="3">Belongs to the PpiC/parvulin rotamase family.</text>
</comment>
<proteinExistence type="inferred from homology"/>